<keyword id="KW-0966">Cell projection</keyword>
<keyword id="KW-0969">Cilium</keyword>
<keyword id="KW-0970">Cilium biogenesis/degradation</keyword>
<keyword id="KW-0175">Coiled coil</keyword>
<keyword id="KW-0963">Cytoplasm</keyword>
<keyword id="KW-0206">Cytoskeleton</keyword>
<keyword id="KW-0217">Developmental protein</keyword>
<keyword id="KW-1185">Reference proteome</keyword>
<proteinExistence type="evidence at transcript level"/>
<comment type="function">
    <text evidence="1 3 6 7 8">Microtubule inner protein (MIP) part of the dynein-decorated doublet microtubules (DMTs) in cilia axoneme, which is required for motile cilia beating (By similarity). Regulates motility patterns of both 9+0 and 9+2 motile cilia through differential localization and recruitment of axonemal dynein components (By similarity). Required for cilium motility within the spinal canal and Kuppfer's vesicle and is involved in the establishment of left-right symmetry during embryogenesis (PubMed:25504577, PubMed:26531781, PubMed:26538025).</text>
</comment>
<comment type="subcellular location">
    <subcellularLocation>
        <location evidence="6">Cytoplasm</location>
        <location evidence="6">Cytoskeleton</location>
        <location evidence="6">Cilium axoneme</location>
    </subcellularLocation>
    <subcellularLocation>
        <location evidence="6">Cytoplasm</location>
        <location evidence="6">Cytoskeleton</location>
        <location evidence="6">Cilium basal body</location>
    </subcellularLocation>
    <text evidence="6">In cilia of the pronephric kidney tubules, prominent localization along the axonemes and also detected at the ciliary base (PubMed:25504577). In cilia of Kuppfer's vesicle and the spinal canal, localizes exclusively to the ciliary base where it overlaps with the ciliary basal bodies (PubMed:25504577).</text>
</comment>
<comment type="developmental stage">
    <text evidence="6 7">First observed at the tailbud stage in the developing Kupffer's vesicle, the zebrafish laterality organ (PubMed:25504577, PubMed:26531781). At the 10 somite stage, expressed in the otic vesicle and the floorplate (PubMed:26531781). At 18 hpf, expressed in the floor plate of the spinal cord and in the developing pronephric ducts (PubMed:25504577). At 18 somites, expressed in the pronephros (PubMed:26531781). From 23 somites, no longer detected (PubMed:26531781).</text>
</comment>
<comment type="disruption phenotype">
    <text evidence="6 7 8">Embryos display total organ heterotaxia (PubMed:26531781). At 48 hours post-fertizilation, pericardial edema is observed and heart looping is reversed or heart fails to loop (PubMed:26538025). Morpholino knockdown in the embryo results in minor defects in the motility of pronephric cilia while the majority of cilia of the spinal canal and Kuppfer's vesicle are barely motile (PubMed:25504577). Reduced number of outer dynein arms in Kuppfer's vesicle cilia (PubMed:25504577).</text>
</comment>
<comment type="similarity">
    <text evidence="11">Belongs to the CFAP53 family.</text>
</comment>
<accession>A0A0R4IFG5</accession>
<accession>Q08CF5</accession>
<gene>
    <name evidence="10 12" type="primary">cfap53</name>
    <name evidence="9" type="synonym">ccdc11</name>
</gene>
<sequence>MLTAQRSRIRCREITGPAHSVALKARPPLSRDIDDIFVRRRKQEATRGEVLEFTKDQSSCDVRMRWERNTQRRVVSATVNRHLQDALDQYQMGIDEKRERLRELLESEELELFKEMEAKKETVLERQAKMHERAKTLRERRESERQRVVADKLDQLFREQSEELRAVQIKRRQDQVCTERESQIRTKEEVRRVQEEEEKLFAQMWESDRLAKEERHNLELQRQRENNLQQKAVLQTQMDMAEQQRIQAKELKQEEAQLLKDQREMLRLEAEREHRQKLQDQEKRRKQLDLSLRLKMKRLTRDRQEELALDMSILEQLLAQEKDEKQDEVLKKLERQEEQRRYREYLSQQLEEQKRLEAETEQLFESELQQAWARREAQWRLEKTARDRLMKDVMDTLRLQIQEKLNENMQKQAEAFKEKEELDRIIQANKLLDEEEKAHFREATKEYQADLLAQMMYRQRIREAEEAEKEYEFQKGLMYEEQYNKKIQDILSRPISSTTAVHPFRRRDRRCSSSGGQMS</sequence>
<feature type="chain" id="PRO_0000438834" description="Cilia- and flagella-associated protein 53">
    <location>
        <begin position="1"/>
        <end position="519"/>
    </location>
</feature>
<feature type="region of interest" description="Disordered" evidence="5">
    <location>
        <begin position="498"/>
        <end position="519"/>
    </location>
</feature>
<feature type="coiled-coil region" evidence="4">
    <location>
        <begin position="80"/>
        <end position="107"/>
    </location>
</feature>
<feature type="coiled-coil region" evidence="4">
    <location>
        <begin position="210"/>
        <end position="339"/>
    </location>
</feature>
<feature type="sequence conflict" description="In Ref. 2; AAI24261." evidence="11" ref="2">
    <original>R</original>
    <variation>G</variation>
    <location>
        <position position="133"/>
    </location>
</feature>
<feature type="sequence conflict" description="In Ref. 2; AAI24261." evidence="11" ref="2">
    <original>S</original>
    <variation>T</variation>
    <location>
        <position position="347"/>
    </location>
</feature>
<dbReference type="EMBL" id="CU928762">
    <property type="status" value="NOT_ANNOTATED_CDS"/>
    <property type="molecule type" value="Genomic_DNA"/>
</dbReference>
<dbReference type="EMBL" id="FO704846">
    <property type="status" value="NOT_ANNOTATED_CDS"/>
    <property type="molecule type" value="Genomic_DNA"/>
</dbReference>
<dbReference type="EMBL" id="BC124260">
    <property type="protein sequence ID" value="AAI24261.1"/>
    <property type="molecule type" value="mRNA"/>
</dbReference>
<dbReference type="RefSeq" id="NP_001038595.2">
    <property type="nucleotide sequence ID" value="NM_001045130.2"/>
</dbReference>
<dbReference type="SMR" id="A0A0R4IFG5"/>
<dbReference type="FunCoup" id="A0A0R4IFG5">
    <property type="interactions" value="274"/>
</dbReference>
<dbReference type="STRING" id="7955.ENSDARP00000134066"/>
<dbReference type="PaxDb" id="7955-ENSDARP00000109483"/>
<dbReference type="Ensembl" id="ENSDART00000167230">
    <property type="protein sequence ID" value="ENSDARP00000134066"/>
    <property type="gene ID" value="ENSDARG00000100892"/>
</dbReference>
<dbReference type="GeneID" id="567344"/>
<dbReference type="KEGG" id="dre:567344"/>
<dbReference type="AGR" id="ZFIN:ZDB-GENE-060503-508"/>
<dbReference type="CTD" id="220136"/>
<dbReference type="ZFIN" id="ZDB-GENE-060503-508">
    <property type="gene designation" value="cfap53"/>
</dbReference>
<dbReference type="eggNOG" id="ENOG502QRDR">
    <property type="taxonomic scope" value="Eukaryota"/>
</dbReference>
<dbReference type="InParanoid" id="A0A0R4IFG5"/>
<dbReference type="OMA" id="IQAQHND"/>
<dbReference type="OrthoDB" id="75950at2759"/>
<dbReference type="PhylomeDB" id="A0A0R4IFG5"/>
<dbReference type="PRO" id="PR:A0A0R4IFG5"/>
<dbReference type="Proteomes" id="UP000000437">
    <property type="component" value="Chromosome 21"/>
</dbReference>
<dbReference type="Bgee" id="ENSDARG00000100892">
    <property type="expression patterns" value="Expressed in testis and 22 other cell types or tissues"/>
</dbReference>
<dbReference type="GO" id="GO:0005879">
    <property type="term" value="C:axonemal microtubule"/>
    <property type="evidence" value="ECO:0000250"/>
    <property type="project" value="UniProtKB"/>
</dbReference>
<dbReference type="GO" id="GO:0005930">
    <property type="term" value="C:axoneme"/>
    <property type="evidence" value="ECO:0000314"/>
    <property type="project" value="ZFIN"/>
</dbReference>
<dbReference type="GO" id="GO:0097546">
    <property type="term" value="C:ciliary base"/>
    <property type="evidence" value="ECO:0000314"/>
    <property type="project" value="ZFIN"/>
</dbReference>
<dbReference type="GO" id="GO:0005576">
    <property type="term" value="C:extracellular region"/>
    <property type="evidence" value="ECO:0007669"/>
    <property type="project" value="GOC"/>
</dbReference>
<dbReference type="GO" id="GO:0060271">
    <property type="term" value="P:cilium assembly"/>
    <property type="evidence" value="ECO:0000315"/>
    <property type="project" value="ZFIN"/>
</dbReference>
<dbReference type="GO" id="GO:0003341">
    <property type="term" value="P:cilium movement"/>
    <property type="evidence" value="ECO:0000315"/>
    <property type="project" value="UniProtKB"/>
</dbReference>
<dbReference type="GO" id="GO:0007368">
    <property type="term" value="P:determination of left/right symmetry"/>
    <property type="evidence" value="ECO:0000315"/>
    <property type="project" value="ZFIN"/>
</dbReference>
<dbReference type="GO" id="GO:0060287">
    <property type="term" value="P:epithelial cilium movement involved in determination of left/right asymmetry"/>
    <property type="evidence" value="ECO:0000315"/>
    <property type="project" value="ZFIN"/>
</dbReference>
<dbReference type="InterPro" id="IPR043596">
    <property type="entry name" value="CFAP53/TCHP"/>
</dbReference>
<dbReference type="InterPro" id="IPR043597">
    <property type="entry name" value="TPH_dom"/>
</dbReference>
<dbReference type="PANTHER" id="PTHR31183:SF1">
    <property type="entry name" value="CILIA- AND FLAGELLA-ASSOCIATED PROTEIN 53"/>
    <property type="match status" value="1"/>
</dbReference>
<dbReference type="PANTHER" id="PTHR31183">
    <property type="entry name" value="TRICHOPLEIN KERATIN FILAMENT-BINDING PROTEIN FAMILY MEMBER"/>
    <property type="match status" value="1"/>
</dbReference>
<dbReference type="Pfam" id="PF13868">
    <property type="entry name" value="TPH"/>
    <property type="match status" value="1"/>
</dbReference>
<organism>
    <name type="scientific">Danio rerio</name>
    <name type="common">Zebrafish</name>
    <name type="synonym">Brachydanio rerio</name>
    <dbReference type="NCBI Taxonomy" id="7955"/>
    <lineage>
        <taxon>Eukaryota</taxon>
        <taxon>Metazoa</taxon>
        <taxon>Chordata</taxon>
        <taxon>Craniata</taxon>
        <taxon>Vertebrata</taxon>
        <taxon>Euteleostomi</taxon>
        <taxon>Actinopterygii</taxon>
        <taxon>Neopterygii</taxon>
        <taxon>Teleostei</taxon>
        <taxon>Ostariophysi</taxon>
        <taxon>Cypriniformes</taxon>
        <taxon>Danionidae</taxon>
        <taxon>Danioninae</taxon>
        <taxon>Danio</taxon>
    </lineage>
</organism>
<protein>
    <recommendedName>
        <fullName evidence="11">Cilia- and flagella-associated protein 53</fullName>
    </recommendedName>
    <alternativeName>
        <fullName evidence="2">Coiled-coil domain-containing protein 11</fullName>
    </alternativeName>
</protein>
<evidence type="ECO:0000250" key="1">
    <source>
        <dbReference type="UniProtKB" id="F1N7G5"/>
    </source>
</evidence>
<evidence type="ECO:0000250" key="2">
    <source>
        <dbReference type="UniProtKB" id="Q96M91"/>
    </source>
</evidence>
<evidence type="ECO:0000250" key="3">
    <source>
        <dbReference type="UniProtKB" id="Q9D439"/>
    </source>
</evidence>
<evidence type="ECO:0000255" key="4"/>
<evidence type="ECO:0000256" key="5">
    <source>
        <dbReference type="SAM" id="MobiDB-lite"/>
    </source>
</evidence>
<evidence type="ECO:0000269" key="6">
    <source>
    </source>
</evidence>
<evidence type="ECO:0000269" key="7">
    <source>
    </source>
</evidence>
<evidence type="ECO:0000269" key="8">
    <source>
    </source>
</evidence>
<evidence type="ECO:0000303" key="9">
    <source>
    </source>
</evidence>
<evidence type="ECO:0000303" key="10">
    <source>
    </source>
</evidence>
<evidence type="ECO:0000305" key="11"/>
<evidence type="ECO:0000312" key="12">
    <source>
        <dbReference type="ZFIN" id="ZDB-GENE-060503-508"/>
    </source>
</evidence>
<name>CFA53_DANRE</name>
<reference key="1">
    <citation type="journal article" date="2013" name="Nature">
        <title>The zebrafish reference genome sequence and its relationship to the human genome.</title>
        <authorList>
            <person name="Howe K."/>
            <person name="Clark M.D."/>
            <person name="Torroja C.F."/>
            <person name="Torrance J."/>
            <person name="Berthelot C."/>
            <person name="Muffato M."/>
            <person name="Collins J.E."/>
            <person name="Humphray S."/>
            <person name="McLaren K."/>
            <person name="Matthews L."/>
            <person name="McLaren S."/>
            <person name="Sealy I."/>
            <person name="Caccamo M."/>
            <person name="Churcher C."/>
            <person name="Scott C."/>
            <person name="Barrett J.C."/>
            <person name="Koch R."/>
            <person name="Rauch G.J."/>
            <person name="White S."/>
            <person name="Chow W."/>
            <person name="Kilian B."/>
            <person name="Quintais L.T."/>
            <person name="Guerra-Assuncao J.A."/>
            <person name="Zhou Y."/>
            <person name="Gu Y."/>
            <person name="Yen J."/>
            <person name="Vogel J.H."/>
            <person name="Eyre T."/>
            <person name="Redmond S."/>
            <person name="Banerjee R."/>
            <person name="Chi J."/>
            <person name="Fu B."/>
            <person name="Langley E."/>
            <person name="Maguire S.F."/>
            <person name="Laird G.K."/>
            <person name="Lloyd D."/>
            <person name="Kenyon E."/>
            <person name="Donaldson S."/>
            <person name="Sehra H."/>
            <person name="Almeida-King J."/>
            <person name="Loveland J."/>
            <person name="Trevanion S."/>
            <person name="Jones M."/>
            <person name="Quail M."/>
            <person name="Willey D."/>
            <person name="Hunt A."/>
            <person name="Burton J."/>
            <person name="Sims S."/>
            <person name="McLay K."/>
            <person name="Plumb B."/>
            <person name="Davis J."/>
            <person name="Clee C."/>
            <person name="Oliver K."/>
            <person name="Clark R."/>
            <person name="Riddle C."/>
            <person name="Elliot D."/>
            <person name="Threadgold G."/>
            <person name="Harden G."/>
            <person name="Ware D."/>
            <person name="Begum S."/>
            <person name="Mortimore B."/>
            <person name="Kerry G."/>
            <person name="Heath P."/>
            <person name="Phillimore B."/>
            <person name="Tracey A."/>
            <person name="Corby N."/>
            <person name="Dunn M."/>
            <person name="Johnson C."/>
            <person name="Wood J."/>
            <person name="Clark S."/>
            <person name="Pelan S."/>
            <person name="Griffiths G."/>
            <person name="Smith M."/>
            <person name="Glithero R."/>
            <person name="Howden P."/>
            <person name="Barker N."/>
            <person name="Lloyd C."/>
            <person name="Stevens C."/>
            <person name="Harley J."/>
            <person name="Holt K."/>
            <person name="Panagiotidis G."/>
            <person name="Lovell J."/>
            <person name="Beasley H."/>
            <person name="Henderson C."/>
            <person name="Gordon D."/>
            <person name="Auger K."/>
            <person name="Wright D."/>
            <person name="Collins J."/>
            <person name="Raisen C."/>
            <person name="Dyer L."/>
            <person name="Leung K."/>
            <person name="Robertson L."/>
            <person name="Ambridge K."/>
            <person name="Leongamornlert D."/>
            <person name="McGuire S."/>
            <person name="Gilderthorp R."/>
            <person name="Griffiths C."/>
            <person name="Manthravadi D."/>
            <person name="Nichol S."/>
            <person name="Barker G."/>
            <person name="Whitehead S."/>
            <person name="Kay M."/>
            <person name="Brown J."/>
            <person name="Murnane C."/>
            <person name="Gray E."/>
            <person name="Humphries M."/>
            <person name="Sycamore N."/>
            <person name="Barker D."/>
            <person name="Saunders D."/>
            <person name="Wallis J."/>
            <person name="Babbage A."/>
            <person name="Hammond S."/>
            <person name="Mashreghi-Mohammadi M."/>
            <person name="Barr L."/>
            <person name="Martin S."/>
            <person name="Wray P."/>
            <person name="Ellington A."/>
            <person name="Matthews N."/>
            <person name="Ellwood M."/>
            <person name="Woodmansey R."/>
            <person name="Clark G."/>
            <person name="Cooper J."/>
            <person name="Tromans A."/>
            <person name="Grafham D."/>
            <person name="Skuce C."/>
            <person name="Pandian R."/>
            <person name="Andrews R."/>
            <person name="Harrison E."/>
            <person name="Kimberley A."/>
            <person name="Garnett J."/>
            <person name="Fosker N."/>
            <person name="Hall R."/>
            <person name="Garner P."/>
            <person name="Kelly D."/>
            <person name="Bird C."/>
            <person name="Palmer S."/>
            <person name="Gehring I."/>
            <person name="Berger A."/>
            <person name="Dooley C.M."/>
            <person name="Ersan-Urun Z."/>
            <person name="Eser C."/>
            <person name="Geiger H."/>
            <person name="Geisler M."/>
            <person name="Karotki L."/>
            <person name="Kirn A."/>
            <person name="Konantz J."/>
            <person name="Konantz M."/>
            <person name="Oberlander M."/>
            <person name="Rudolph-Geiger S."/>
            <person name="Teucke M."/>
            <person name="Lanz C."/>
            <person name="Raddatz G."/>
            <person name="Osoegawa K."/>
            <person name="Zhu B."/>
            <person name="Rapp A."/>
            <person name="Widaa S."/>
            <person name="Langford C."/>
            <person name="Yang F."/>
            <person name="Schuster S.C."/>
            <person name="Carter N.P."/>
            <person name="Harrow J."/>
            <person name="Ning Z."/>
            <person name="Herrero J."/>
            <person name="Searle S.M."/>
            <person name="Enright A."/>
            <person name="Geisler R."/>
            <person name="Plasterk R.H."/>
            <person name="Lee C."/>
            <person name="Westerfield M."/>
            <person name="de Jong P.J."/>
            <person name="Zon L.I."/>
            <person name="Postlethwait J.H."/>
            <person name="Nusslein-Volhard C."/>
            <person name="Hubbard T.J."/>
            <person name="Roest Crollius H."/>
            <person name="Rogers J."/>
            <person name="Stemple D.L."/>
        </authorList>
    </citation>
    <scope>NUCLEOTIDE SEQUENCE [LARGE SCALE GENOMIC DNA]</scope>
    <source>
        <strain>Tuebingen</strain>
    </source>
</reference>
<reference key="2">
    <citation type="submission" date="2006-09" db="EMBL/GenBank/DDBJ databases">
        <authorList>
            <consortium name="NIH - Zebrafish Gene Collection (ZGC) project"/>
        </authorList>
    </citation>
    <scope>NUCLEOTIDE SEQUENCE [LARGE SCALE MRNA]</scope>
    <source>
        <tissue>Olfactory epithelium</tissue>
    </source>
</reference>
<reference key="3">
    <citation type="journal article" date="2015" name="Hum. Mutat.">
        <title>Mutations in CCDC11, which encodes a coiled-coil containing ciliary protein, causes situs inversus due to dysmotility of monocilia in the left-right organizer.</title>
        <authorList>
            <person name="Narasimhan V."/>
            <person name="Hjeij R."/>
            <person name="Vij S."/>
            <person name="Loges N.T."/>
            <person name="Wallmeier J."/>
            <person name="Koerner-Rettberg C."/>
            <person name="Werner C."/>
            <person name="Thamilselvam S.K."/>
            <person name="Boey A."/>
            <person name="Choksi S.P."/>
            <person name="Pennekamp P."/>
            <person name="Roy S."/>
            <person name="Omran H."/>
        </authorList>
    </citation>
    <scope>FUNCTION</scope>
    <scope>SUBCELLULAR LOCATION</scope>
    <scope>DEVELOPMENTAL STAGE</scope>
    <scope>DISRUPTION PHENOTYPE</scope>
</reference>
<reference key="4">
    <citation type="journal article" date="2016" name="Hum. Mutat.">
        <title>A zebrafish loss-of-function model for human CFAP53 mutations reveals its specific role in laterality organ function.</title>
        <authorList>
            <person name="Noel E.S."/>
            <person name="Momenah T.S."/>
            <person name="Al-Dagriri K."/>
            <person name="Al-Suwaid A."/>
            <person name="Al-Shahrani S."/>
            <person name="Jiang H."/>
            <person name="Willekers S."/>
            <person name="Oostveen Y.Y."/>
            <person name="Chocron S."/>
            <person name="Postma A.V."/>
            <person name="Bhuiyan Z.A."/>
            <person name="Bakkers J."/>
        </authorList>
    </citation>
    <scope>FUNCTION</scope>
    <scope>DEVELOPMENTAL STAGE</scope>
    <scope>DISRUPTION PHENOTYPE</scope>
</reference>
<reference key="5">
    <citation type="journal article" date="2016" name="Mol. Biol. Cell">
        <title>Ccdc11 is a novel centriolar satellite protein essential for ciliogenesis and establishment of left-right asymmetry.</title>
        <authorList>
            <person name="Silva E."/>
            <person name="Betleja E."/>
            <person name="John E."/>
            <person name="Spear P."/>
            <person name="Moresco J.J."/>
            <person name="Zhang S."/>
            <person name="Yates J.R. III"/>
            <person name="Mitchell B.J."/>
            <person name="Mahjoub M.R."/>
        </authorList>
    </citation>
    <scope>FUNCTION</scope>
    <scope>DISRUPTION PHENOTYPE</scope>
</reference>